<proteinExistence type="inferred from homology"/>
<sequence length="188" mass="21041">MGTIADDILGDLHGRILKTLDQLRTDLSAVRTGRASLHLLDNVRVDYYGTPTPLNQVATMSVPEARLIVVKPWEKSMIPPIEKAIREANLGLNPMSDKDLVRVPIPALTEERRKEIVKQVKHKGEEHKIAVRNVRREAKELIEVAEKDGDISGDDAEKALEKMQKETDDGVKKIDEIVAAKEKDVLQV</sequence>
<protein>
    <recommendedName>
        <fullName evidence="1">Ribosome-recycling factor</fullName>
        <shortName evidence="1">RRF</shortName>
    </recommendedName>
    <alternativeName>
        <fullName evidence="1">Ribosome-releasing factor</fullName>
    </alternativeName>
</protein>
<name>RRF_ANADE</name>
<keyword id="KW-0963">Cytoplasm</keyword>
<keyword id="KW-0648">Protein biosynthesis</keyword>
<keyword id="KW-1185">Reference proteome</keyword>
<gene>
    <name evidence="1" type="primary">frr</name>
    <name type="ordered locus">Adeh_0281</name>
</gene>
<evidence type="ECO:0000255" key="1">
    <source>
        <dbReference type="HAMAP-Rule" id="MF_00040"/>
    </source>
</evidence>
<feature type="chain" id="PRO_0000340999" description="Ribosome-recycling factor">
    <location>
        <begin position="1"/>
        <end position="188"/>
    </location>
</feature>
<reference key="1">
    <citation type="submission" date="2006-01" db="EMBL/GenBank/DDBJ databases">
        <title>Complete sequence of Anaeromyxobacter dehalogenans 2CP-C.</title>
        <authorList>
            <person name="Copeland A."/>
            <person name="Lucas S."/>
            <person name="Lapidus A."/>
            <person name="Barry K."/>
            <person name="Detter J.C."/>
            <person name="Glavina T."/>
            <person name="Hammon N."/>
            <person name="Israni S."/>
            <person name="Pitluck S."/>
            <person name="Brettin T."/>
            <person name="Bruce D."/>
            <person name="Han C."/>
            <person name="Tapia R."/>
            <person name="Gilna P."/>
            <person name="Kiss H."/>
            <person name="Schmutz J."/>
            <person name="Larimer F."/>
            <person name="Land M."/>
            <person name="Kyrpides N."/>
            <person name="Anderson I."/>
            <person name="Sanford R.A."/>
            <person name="Ritalahti K.M."/>
            <person name="Thomas H.S."/>
            <person name="Kirby J.R."/>
            <person name="Zhulin I.B."/>
            <person name="Loeffler F.E."/>
            <person name="Richardson P."/>
        </authorList>
    </citation>
    <scope>NUCLEOTIDE SEQUENCE [LARGE SCALE GENOMIC DNA]</scope>
    <source>
        <strain>2CP-C</strain>
    </source>
</reference>
<comment type="function">
    <text evidence="1">Responsible for the release of ribosomes from messenger RNA at the termination of protein biosynthesis. May increase the efficiency of translation by recycling ribosomes from one round of translation to another.</text>
</comment>
<comment type="subcellular location">
    <subcellularLocation>
        <location evidence="1">Cytoplasm</location>
    </subcellularLocation>
</comment>
<comment type="similarity">
    <text evidence="1">Belongs to the RRF family.</text>
</comment>
<accession>Q2IMM1</accession>
<organism>
    <name type="scientific">Anaeromyxobacter dehalogenans (strain 2CP-C)</name>
    <dbReference type="NCBI Taxonomy" id="290397"/>
    <lineage>
        <taxon>Bacteria</taxon>
        <taxon>Pseudomonadati</taxon>
        <taxon>Myxococcota</taxon>
        <taxon>Myxococcia</taxon>
        <taxon>Myxococcales</taxon>
        <taxon>Cystobacterineae</taxon>
        <taxon>Anaeromyxobacteraceae</taxon>
        <taxon>Anaeromyxobacter</taxon>
    </lineage>
</organism>
<dbReference type="EMBL" id="CP000251">
    <property type="protein sequence ID" value="ABC80057.1"/>
    <property type="molecule type" value="Genomic_DNA"/>
</dbReference>
<dbReference type="RefSeq" id="WP_011419340.1">
    <property type="nucleotide sequence ID" value="NC_007760.1"/>
</dbReference>
<dbReference type="SMR" id="Q2IMM1"/>
<dbReference type="STRING" id="290397.Adeh_0281"/>
<dbReference type="KEGG" id="ade:Adeh_0281"/>
<dbReference type="eggNOG" id="COG0233">
    <property type="taxonomic scope" value="Bacteria"/>
</dbReference>
<dbReference type="HOGENOM" id="CLU_073981_2_0_7"/>
<dbReference type="OrthoDB" id="9804006at2"/>
<dbReference type="Proteomes" id="UP000001935">
    <property type="component" value="Chromosome"/>
</dbReference>
<dbReference type="GO" id="GO:0005829">
    <property type="term" value="C:cytosol"/>
    <property type="evidence" value="ECO:0007669"/>
    <property type="project" value="GOC"/>
</dbReference>
<dbReference type="GO" id="GO:0043023">
    <property type="term" value="F:ribosomal large subunit binding"/>
    <property type="evidence" value="ECO:0007669"/>
    <property type="project" value="TreeGrafter"/>
</dbReference>
<dbReference type="GO" id="GO:0002184">
    <property type="term" value="P:cytoplasmic translational termination"/>
    <property type="evidence" value="ECO:0007669"/>
    <property type="project" value="TreeGrafter"/>
</dbReference>
<dbReference type="CDD" id="cd00520">
    <property type="entry name" value="RRF"/>
    <property type="match status" value="1"/>
</dbReference>
<dbReference type="FunFam" id="1.10.132.20:FF:000001">
    <property type="entry name" value="Ribosome-recycling factor"/>
    <property type="match status" value="1"/>
</dbReference>
<dbReference type="FunFam" id="3.30.1360.40:FF:000001">
    <property type="entry name" value="Ribosome-recycling factor"/>
    <property type="match status" value="1"/>
</dbReference>
<dbReference type="Gene3D" id="3.30.1360.40">
    <property type="match status" value="1"/>
</dbReference>
<dbReference type="Gene3D" id="1.10.132.20">
    <property type="entry name" value="Ribosome-recycling factor"/>
    <property type="match status" value="1"/>
</dbReference>
<dbReference type="HAMAP" id="MF_00040">
    <property type="entry name" value="RRF"/>
    <property type="match status" value="1"/>
</dbReference>
<dbReference type="InterPro" id="IPR002661">
    <property type="entry name" value="Ribosome_recyc_fac"/>
</dbReference>
<dbReference type="InterPro" id="IPR023584">
    <property type="entry name" value="Ribosome_recyc_fac_dom"/>
</dbReference>
<dbReference type="InterPro" id="IPR036191">
    <property type="entry name" value="RRF_sf"/>
</dbReference>
<dbReference type="NCBIfam" id="TIGR00496">
    <property type="entry name" value="frr"/>
    <property type="match status" value="1"/>
</dbReference>
<dbReference type="PANTHER" id="PTHR20982:SF3">
    <property type="entry name" value="MITOCHONDRIAL RIBOSOME RECYCLING FACTOR PSEUDO 1"/>
    <property type="match status" value="1"/>
</dbReference>
<dbReference type="PANTHER" id="PTHR20982">
    <property type="entry name" value="RIBOSOME RECYCLING FACTOR"/>
    <property type="match status" value="1"/>
</dbReference>
<dbReference type="Pfam" id="PF01765">
    <property type="entry name" value="RRF"/>
    <property type="match status" value="1"/>
</dbReference>
<dbReference type="SUPFAM" id="SSF55194">
    <property type="entry name" value="Ribosome recycling factor, RRF"/>
    <property type="match status" value="1"/>
</dbReference>